<keyword id="KW-0285">Flavoprotein</keyword>
<keyword id="KW-0288">FMN</keyword>
<keyword id="KW-0520">NAD</keyword>
<keyword id="KW-0560">Oxidoreductase</keyword>
<keyword id="KW-1185">Reference proteome</keyword>
<gene>
    <name evidence="1" type="primary">azoR</name>
    <name type="ordered locus">SARI_01344</name>
</gene>
<reference key="1">
    <citation type="submission" date="2007-11" db="EMBL/GenBank/DDBJ databases">
        <authorList>
            <consortium name="The Salmonella enterica serovar Arizonae Genome Sequencing Project"/>
            <person name="McClelland M."/>
            <person name="Sanderson E.K."/>
            <person name="Porwollik S."/>
            <person name="Spieth J."/>
            <person name="Clifton W.S."/>
            <person name="Fulton R."/>
            <person name="Chunyan W."/>
            <person name="Wollam A."/>
            <person name="Shah N."/>
            <person name="Pepin K."/>
            <person name="Bhonagiri V."/>
            <person name="Nash W."/>
            <person name="Johnson M."/>
            <person name="Thiruvilangam P."/>
            <person name="Wilson R."/>
        </authorList>
    </citation>
    <scope>NUCLEOTIDE SEQUENCE [LARGE SCALE GENOMIC DNA]</scope>
    <source>
        <strain>ATCC BAA-731 / CDC346-86 / RSK2980</strain>
    </source>
</reference>
<comment type="function">
    <text evidence="1">Quinone reductase that provides resistance to thiol-specific stress caused by electrophilic quinones.</text>
</comment>
<comment type="function">
    <text evidence="1">Also exhibits azoreductase activity. Catalyzes the reductive cleavage of the azo bond in aromatic azo compounds to the corresponding amines.</text>
</comment>
<comment type="catalytic activity">
    <reaction evidence="1">
        <text>2 a quinone + NADH + H(+) = 2 a 1,4-benzosemiquinone + NAD(+)</text>
        <dbReference type="Rhea" id="RHEA:65952"/>
        <dbReference type="ChEBI" id="CHEBI:15378"/>
        <dbReference type="ChEBI" id="CHEBI:57540"/>
        <dbReference type="ChEBI" id="CHEBI:57945"/>
        <dbReference type="ChEBI" id="CHEBI:132124"/>
        <dbReference type="ChEBI" id="CHEBI:134225"/>
    </reaction>
</comment>
<comment type="catalytic activity">
    <reaction evidence="1">
        <text>N,N-dimethyl-1,4-phenylenediamine + anthranilate + 2 NAD(+) = 2-(4-dimethylaminophenyl)diazenylbenzoate + 2 NADH + 2 H(+)</text>
        <dbReference type="Rhea" id="RHEA:55872"/>
        <dbReference type="ChEBI" id="CHEBI:15378"/>
        <dbReference type="ChEBI" id="CHEBI:15783"/>
        <dbReference type="ChEBI" id="CHEBI:16567"/>
        <dbReference type="ChEBI" id="CHEBI:57540"/>
        <dbReference type="ChEBI" id="CHEBI:57945"/>
        <dbReference type="ChEBI" id="CHEBI:71579"/>
        <dbReference type="EC" id="1.7.1.17"/>
    </reaction>
</comment>
<comment type="cofactor">
    <cofactor evidence="1">
        <name>FMN</name>
        <dbReference type="ChEBI" id="CHEBI:58210"/>
    </cofactor>
    <text evidence="1">Binds 1 FMN per subunit.</text>
</comment>
<comment type="subunit">
    <text evidence="1">Homodimer.</text>
</comment>
<comment type="similarity">
    <text evidence="1">Belongs to the azoreductase type 1 family.</text>
</comment>
<evidence type="ECO:0000255" key="1">
    <source>
        <dbReference type="HAMAP-Rule" id="MF_01216"/>
    </source>
</evidence>
<organism>
    <name type="scientific">Salmonella arizonae (strain ATCC BAA-731 / CDC346-86 / RSK2980)</name>
    <dbReference type="NCBI Taxonomy" id="41514"/>
    <lineage>
        <taxon>Bacteria</taxon>
        <taxon>Pseudomonadati</taxon>
        <taxon>Pseudomonadota</taxon>
        <taxon>Gammaproteobacteria</taxon>
        <taxon>Enterobacterales</taxon>
        <taxon>Enterobacteriaceae</taxon>
        <taxon>Salmonella</taxon>
    </lineage>
</organism>
<feature type="chain" id="PRO_1000085585" description="FMN-dependent NADH:quinone oxidoreductase">
    <location>
        <begin position="1"/>
        <end position="201"/>
    </location>
</feature>
<feature type="binding site" evidence="1">
    <location>
        <position position="10"/>
    </location>
    <ligand>
        <name>FMN</name>
        <dbReference type="ChEBI" id="CHEBI:58210"/>
    </ligand>
</feature>
<feature type="binding site" evidence="1">
    <location>
        <begin position="16"/>
        <end position="18"/>
    </location>
    <ligand>
        <name>FMN</name>
        <dbReference type="ChEBI" id="CHEBI:58210"/>
    </ligand>
</feature>
<feature type="binding site" evidence="1">
    <location>
        <begin position="96"/>
        <end position="99"/>
    </location>
    <ligand>
        <name>FMN</name>
        <dbReference type="ChEBI" id="CHEBI:58210"/>
    </ligand>
</feature>
<feature type="binding site" evidence="1">
    <location>
        <begin position="140"/>
        <end position="143"/>
    </location>
    <ligand>
        <name>FMN</name>
        <dbReference type="ChEBI" id="CHEBI:58210"/>
    </ligand>
</feature>
<name>AZOR_SALAR</name>
<protein>
    <recommendedName>
        <fullName evidence="1">FMN-dependent NADH:quinone oxidoreductase</fullName>
        <ecNumber evidence="1">1.6.5.-</ecNumber>
    </recommendedName>
    <alternativeName>
        <fullName evidence="1">Azo-dye reductase</fullName>
    </alternativeName>
    <alternativeName>
        <fullName evidence="1">FMN-dependent NADH-azo compound oxidoreductase</fullName>
    </alternativeName>
    <alternativeName>
        <fullName evidence="1">FMN-dependent NADH-azoreductase</fullName>
        <ecNumber evidence="1">1.7.1.17</ecNumber>
    </alternativeName>
</protein>
<sequence>MSKVLVLKSSILAGYSQSGQLTDYFIEQWREKHVADEITVRDLAANPVPVLDGELVGAMRPGDAPLTPRQQDALALSDELIAELKAHDVIVIAAPMYNFNIPTQLKNYFDLIARAGVTFRYTEKGPEGLVTGKRAVVLSSRGGIHKDTPTDLIAPYLKVFLGFIGITDVNFVFAEGIAYGPEVAAKAQSDAKAAIDSVVAA</sequence>
<accession>A9MQU9</accession>
<dbReference type="EC" id="1.6.5.-" evidence="1"/>
<dbReference type="EC" id="1.7.1.17" evidence="1"/>
<dbReference type="EMBL" id="CP000880">
    <property type="protein sequence ID" value="ABX21244.1"/>
    <property type="molecule type" value="Genomic_DNA"/>
</dbReference>
<dbReference type="SMR" id="A9MQU9"/>
<dbReference type="STRING" id="41514.SARI_01344"/>
<dbReference type="KEGG" id="ses:SARI_01344"/>
<dbReference type="HOGENOM" id="CLU_088964_0_0_6"/>
<dbReference type="Proteomes" id="UP000002084">
    <property type="component" value="Chromosome"/>
</dbReference>
<dbReference type="GO" id="GO:0009055">
    <property type="term" value="F:electron transfer activity"/>
    <property type="evidence" value="ECO:0007669"/>
    <property type="project" value="UniProtKB-UniRule"/>
</dbReference>
<dbReference type="GO" id="GO:0010181">
    <property type="term" value="F:FMN binding"/>
    <property type="evidence" value="ECO:0007669"/>
    <property type="project" value="UniProtKB-UniRule"/>
</dbReference>
<dbReference type="GO" id="GO:0016652">
    <property type="term" value="F:oxidoreductase activity, acting on NAD(P)H as acceptor"/>
    <property type="evidence" value="ECO:0007669"/>
    <property type="project" value="UniProtKB-UniRule"/>
</dbReference>
<dbReference type="GO" id="GO:0016655">
    <property type="term" value="F:oxidoreductase activity, acting on NAD(P)H, quinone or similar compound as acceptor"/>
    <property type="evidence" value="ECO:0007669"/>
    <property type="project" value="InterPro"/>
</dbReference>
<dbReference type="FunFam" id="3.40.50.360:FF:000010">
    <property type="entry name" value="FMN-dependent NADH-azoreductase"/>
    <property type="match status" value="1"/>
</dbReference>
<dbReference type="Gene3D" id="3.40.50.360">
    <property type="match status" value="1"/>
</dbReference>
<dbReference type="HAMAP" id="MF_01216">
    <property type="entry name" value="Azoreductase_type1"/>
    <property type="match status" value="1"/>
</dbReference>
<dbReference type="InterPro" id="IPR003680">
    <property type="entry name" value="Flavodoxin_fold"/>
</dbReference>
<dbReference type="InterPro" id="IPR029039">
    <property type="entry name" value="Flavoprotein-like_sf"/>
</dbReference>
<dbReference type="InterPro" id="IPR050104">
    <property type="entry name" value="FMN-dep_NADH:Q_OxRdtase_AzoR1"/>
</dbReference>
<dbReference type="InterPro" id="IPR023048">
    <property type="entry name" value="NADH:quinone_OxRdtase_FMN_depd"/>
</dbReference>
<dbReference type="PANTHER" id="PTHR43741">
    <property type="entry name" value="FMN-DEPENDENT NADH-AZOREDUCTASE 1"/>
    <property type="match status" value="1"/>
</dbReference>
<dbReference type="PANTHER" id="PTHR43741:SF2">
    <property type="entry name" value="FMN-DEPENDENT NADH:QUINONE OXIDOREDUCTASE"/>
    <property type="match status" value="1"/>
</dbReference>
<dbReference type="Pfam" id="PF02525">
    <property type="entry name" value="Flavodoxin_2"/>
    <property type="match status" value="1"/>
</dbReference>
<dbReference type="SUPFAM" id="SSF52218">
    <property type="entry name" value="Flavoproteins"/>
    <property type="match status" value="1"/>
</dbReference>
<proteinExistence type="inferred from homology"/>